<sequence length="139" mass="15715">MKPAARRRARECAVQALYSWQLSRNDIADVEYQFLAEQDVKDVDVLYFRELLAGVATNTAYLDGLMKPYLSRLLEELGQVEKAVLRIALFELSKRSDVPYKVAINEAIELAKTFGAEDSHKFVNGVLDKAAPVIRPNKK</sequence>
<gene>
    <name evidence="1" type="primary">nusB</name>
    <name type="ordered locus">EFER_2609</name>
</gene>
<dbReference type="EMBL" id="CU928158">
    <property type="protein sequence ID" value="CAQ90104.1"/>
    <property type="molecule type" value="Genomic_DNA"/>
</dbReference>
<dbReference type="RefSeq" id="WP_000801130.1">
    <property type="nucleotide sequence ID" value="NC_011740.1"/>
</dbReference>
<dbReference type="SMR" id="B7LMH1"/>
<dbReference type="GeneID" id="75056360"/>
<dbReference type="KEGG" id="efe:EFER_2609"/>
<dbReference type="HOGENOM" id="CLU_087843_4_1_6"/>
<dbReference type="OrthoDB" id="9789556at2"/>
<dbReference type="Proteomes" id="UP000000745">
    <property type="component" value="Chromosome"/>
</dbReference>
<dbReference type="GO" id="GO:0005829">
    <property type="term" value="C:cytosol"/>
    <property type="evidence" value="ECO:0007669"/>
    <property type="project" value="TreeGrafter"/>
</dbReference>
<dbReference type="GO" id="GO:0003723">
    <property type="term" value="F:RNA binding"/>
    <property type="evidence" value="ECO:0007669"/>
    <property type="project" value="UniProtKB-UniRule"/>
</dbReference>
<dbReference type="GO" id="GO:0006353">
    <property type="term" value="P:DNA-templated transcription termination"/>
    <property type="evidence" value="ECO:0007669"/>
    <property type="project" value="UniProtKB-UniRule"/>
</dbReference>
<dbReference type="GO" id="GO:0031564">
    <property type="term" value="P:transcription antitermination"/>
    <property type="evidence" value="ECO:0007669"/>
    <property type="project" value="UniProtKB-KW"/>
</dbReference>
<dbReference type="CDD" id="cd00619">
    <property type="entry name" value="Terminator_NusB"/>
    <property type="match status" value="1"/>
</dbReference>
<dbReference type="FunFam" id="1.10.940.10:FF:000001">
    <property type="entry name" value="Transcription antitermination factor NusB"/>
    <property type="match status" value="1"/>
</dbReference>
<dbReference type="Gene3D" id="1.10.940.10">
    <property type="entry name" value="NusB-like"/>
    <property type="match status" value="1"/>
</dbReference>
<dbReference type="HAMAP" id="MF_00073">
    <property type="entry name" value="NusB"/>
    <property type="match status" value="1"/>
</dbReference>
<dbReference type="InterPro" id="IPR035926">
    <property type="entry name" value="NusB-like_sf"/>
</dbReference>
<dbReference type="InterPro" id="IPR011605">
    <property type="entry name" value="NusB_fam"/>
</dbReference>
<dbReference type="InterPro" id="IPR006027">
    <property type="entry name" value="NusB_RsmB_TIM44"/>
</dbReference>
<dbReference type="NCBIfam" id="TIGR01951">
    <property type="entry name" value="nusB"/>
    <property type="match status" value="1"/>
</dbReference>
<dbReference type="PANTHER" id="PTHR11078:SF3">
    <property type="entry name" value="ANTITERMINATION NUSB DOMAIN-CONTAINING PROTEIN"/>
    <property type="match status" value="1"/>
</dbReference>
<dbReference type="PANTHER" id="PTHR11078">
    <property type="entry name" value="N UTILIZATION SUBSTANCE PROTEIN B-RELATED"/>
    <property type="match status" value="1"/>
</dbReference>
<dbReference type="Pfam" id="PF01029">
    <property type="entry name" value="NusB"/>
    <property type="match status" value="1"/>
</dbReference>
<dbReference type="SUPFAM" id="SSF48013">
    <property type="entry name" value="NusB-like"/>
    <property type="match status" value="1"/>
</dbReference>
<proteinExistence type="inferred from homology"/>
<accession>B7LMH1</accession>
<protein>
    <recommendedName>
        <fullName evidence="1">Transcription antitermination protein NusB</fullName>
    </recommendedName>
    <alternativeName>
        <fullName evidence="1">Antitermination factor NusB</fullName>
    </alternativeName>
</protein>
<evidence type="ECO:0000255" key="1">
    <source>
        <dbReference type="HAMAP-Rule" id="MF_00073"/>
    </source>
</evidence>
<comment type="function">
    <text evidence="1">Involved in transcription antitermination. Required for transcription of ribosomal RNA (rRNA) genes. Binds specifically to the boxA antiterminator sequence of the ribosomal RNA (rrn) operons.</text>
</comment>
<comment type="similarity">
    <text evidence="1">Belongs to the NusB family.</text>
</comment>
<organism>
    <name type="scientific">Escherichia fergusonii (strain ATCC 35469 / DSM 13698 / CCUG 18766 / IAM 14443 / JCM 21226 / LMG 7866 / NBRC 102419 / NCTC 12128 / CDC 0568-73)</name>
    <dbReference type="NCBI Taxonomy" id="585054"/>
    <lineage>
        <taxon>Bacteria</taxon>
        <taxon>Pseudomonadati</taxon>
        <taxon>Pseudomonadota</taxon>
        <taxon>Gammaproteobacteria</taxon>
        <taxon>Enterobacterales</taxon>
        <taxon>Enterobacteriaceae</taxon>
        <taxon>Escherichia</taxon>
    </lineage>
</organism>
<keyword id="KW-0694">RNA-binding</keyword>
<keyword id="KW-0804">Transcription</keyword>
<keyword id="KW-0889">Transcription antitermination</keyword>
<keyword id="KW-0805">Transcription regulation</keyword>
<name>NUSB_ESCF3</name>
<reference key="1">
    <citation type="journal article" date="2009" name="PLoS Genet.">
        <title>Organised genome dynamics in the Escherichia coli species results in highly diverse adaptive paths.</title>
        <authorList>
            <person name="Touchon M."/>
            <person name="Hoede C."/>
            <person name="Tenaillon O."/>
            <person name="Barbe V."/>
            <person name="Baeriswyl S."/>
            <person name="Bidet P."/>
            <person name="Bingen E."/>
            <person name="Bonacorsi S."/>
            <person name="Bouchier C."/>
            <person name="Bouvet O."/>
            <person name="Calteau A."/>
            <person name="Chiapello H."/>
            <person name="Clermont O."/>
            <person name="Cruveiller S."/>
            <person name="Danchin A."/>
            <person name="Diard M."/>
            <person name="Dossat C."/>
            <person name="Karoui M.E."/>
            <person name="Frapy E."/>
            <person name="Garry L."/>
            <person name="Ghigo J.M."/>
            <person name="Gilles A.M."/>
            <person name="Johnson J."/>
            <person name="Le Bouguenec C."/>
            <person name="Lescat M."/>
            <person name="Mangenot S."/>
            <person name="Martinez-Jehanne V."/>
            <person name="Matic I."/>
            <person name="Nassif X."/>
            <person name="Oztas S."/>
            <person name="Petit M.A."/>
            <person name="Pichon C."/>
            <person name="Rouy Z."/>
            <person name="Ruf C.S."/>
            <person name="Schneider D."/>
            <person name="Tourret J."/>
            <person name="Vacherie B."/>
            <person name="Vallenet D."/>
            <person name="Medigue C."/>
            <person name="Rocha E.P.C."/>
            <person name="Denamur E."/>
        </authorList>
    </citation>
    <scope>NUCLEOTIDE SEQUENCE [LARGE SCALE GENOMIC DNA]</scope>
    <source>
        <strain>ATCC 35469 / DSM 13698 / BCRC 15582 / CCUG 18766 / IAM 14443 / JCM 21226 / LMG 7866 / NBRC 102419 / NCTC 12128 / CDC 0568-73</strain>
    </source>
</reference>
<feature type="chain" id="PRO_1000117054" description="Transcription antitermination protein NusB">
    <location>
        <begin position="1"/>
        <end position="139"/>
    </location>
</feature>